<comment type="function">
    <text evidence="1">DNA ligase that catalyzes the formation of phosphodiester linkages between 5'-phosphoryl and 3'-hydroxyl groups in double-stranded DNA using NAD as a coenzyme and as the energy source for the reaction. It is essential for DNA replication and repair of damaged DNA.</text>
</comment>
<comment type="catalytic activity">
    <reaction evidence="1">
        <text>NAD(+) + (deoxyribonucleotide)n-3'-hydroxyl + 5'-phospho-(deoxyribonucleotide)m = (deoxyribonucleotide)n+m + AMP + beta-nicotinamide D-nucleotide.</text>
        <dbReference type="EC" id="6.5.1.2"/>
    </reaction>
</comment>
<comment type="cofactor">
    <cofactor evidence="1">
        <name>Mg(2+)</name>
        <dbReference type="ChEBI" id="CHEBI:18420"/>
    </cofactor>
    <cofactor evidence="1">
        <name>Mn(2+)</name>
        <dbReference type="ChEBI" id="CHEBI:29035"/>
    </cofactor>
</comment>
<comment type="similarity">
    <text evidence="1">Belongs to the NAD-dependent DNA ligase family. LigA subfamily.</text>
</comment>
<reference key="1">
    <citation type="journal article" date="2008" name="PLoS Genet.">
        <title>Complete genome sequence of the N2-fixing broad host range endophyte Klebsiella pneumoniae 342 and virulence predictions verified in mice.</title>
        <authorList>
            <person name="Fouts D.E."/>
            <person name="Tyler H.L."/>
            <person name="DeBoy R.T."/>
            <person name="Daugherty S."/>
            <person name="Ren Q."/>
            <person name="Badger J.H."/>
            <person name="Durkin A.S."/>
            <person name="Huot H."/>
            <person name="Shrivastava S."/>
            <person name="Kothari S."/>
            <person name="Dodson R.J."/>
            <person name="Mohamoud Y."/>
            <person name="Khouri H."/>
            <person name="Roesch L.F.W."/>
            <person name="Krogfelt K.A."/>
            <person name="Struve C."/>
            <person name="Triplett E.W."/>
            <person name="Methe B.A."/>
        </authorList>
    </citation>
    <scope>NUCLEOTIDE SEQUENCE [LARGE SCALE GENOMIC DNA]</scope>
    <source>
        <strain>342</strain>
    </source>
</reference>
<accession>B5XVT4</accession>
<feature type="chain" id="PRO_0000380401" description="DNA ligase">
    <location>
        <begin position="1"/>
        <end position="671"/>
    </location>
</feature>
<feature type="domain" description="BRCT" evidence="1">
    <location>
        <begin position="593"/>
        <end position="671"/>
    </location>
</feature>
<feature type="active site" description="N6-AMP-lysine intermediate" evidence="1">
    <location>
        <position position="115"/>
    </location>
</feature>
<feature type="binding site" evidence="1">
    <location>
        <begin position="32"/>
        <end position="36"/>
    </location>
    <ligand>
        <name>NAD(+)</name>
        <dbReference type="ChEBI" id="CHEBI:57540"/>
    </ligand>
</feature>
<feature type="binding site" evidence="1">
    <location>
        <begin position="81"/>
        <end position="82"/>
    </location>
    <ligand>
        <name>NAD(+)</name>
        <dbReference type="ChEBI" id="CHEBI:57540"/>
    </ligand>
</feature>
<feature type="binding site" evidence="1">
    <location>
        <position position="113"/>
    </location>
    <ligand>
        <name>NAD(+)</name>
        <dbReference type="ChEBI" id="CHEBI:57540"/>
    </ligand>
</feature>
<feature type="binding site" evidence="1">
    <location>
        <position position="136"/>
    </location>
    <ligand>
        <name>NAD(+)</name>
        <dbReference type="ChEBI" id="CHEBI:57540"/>
    </ligand>
</feature>
<feature type="binding site" evidence="1">
    <location>
        <position position="173"/>
    </location>
    <ligand>
        <name>NAD(+)</name>
        <dbReference type="ChEBI" id="CHEBI:57540"/>
    </ligand>
</feature>
<feature type="binding site" evidence="1">
    <location>
        <position position="290"/>
    </location>
    <ligand>
        <name>NAD(+)</name>
        <dbReference type="ChEBI" id="CHEBI:57540"/>
    </ligand>
</feature>
<feature type="binding site" evidence="1">
    <location>
        <position position="314"/>
    </location>
    <ligand>
        <name>NAD(+)</name>
        <dbReference type="ChEBI" id="CHEBI:57540"/>
    </ligand>
</feature>
<feature type="binding site" evidence="1">
    <location>
        <position position="408"/>
    </location>
    <ligand>
        <name>Zn(2+)</name>
        <dbReference type="ChEBI" id="CHEBI:29105"/>
    </ligand>
</feature>
<feature type="binding site" evidence="1">
    <location>
        <position position="411"/>
    </location>
    <ligand>
        <name>Zn(2+)</name>
        <dbReference type="ChEBI" id="CHEBI:29105"/>
    </ligand>
</feature>
<feature type="binding site" evidence="1">
    <location>
        <position position="426"/>
    </location>
    <ligand>
        <name>Zn(2+)</name>
        <dbReference type="ChEBI" id="CHEBI:29105"/>
    </ligand>
</feature>
<feature type="binding site" evidence="1">
    <location>
        <position position="432"/>
    </location>
    <ligand>
        <name>Zn(2+)</name>
        <dbReference type="ChEBI" id="CHEBI:29105"/>
    </ligand>
</feature>
<gene>
    <name evidence="1" type="primary">ligA</name>
    <name type="ordered locus">KPK_1381</name>
</gene>
<protein>
    <recommendedName>
        <fullName evidence="1">DNA ligase</fullName>
        <ecNumber evidence="1">6.5.1.2</ecNumber>
    </recommendedName>
    <alternativeName>
        <fullName evidence="1">Polydeoxyribonucleotide synthase [NAD(+)]</fullName>
    </alternativeName>
</protein>
<organism>
    <name type="scientific">Klebsiella pneumoniae (strain 342)</name>
    <dbReference type="NCBI Taxonomy" id="507522"/>
    <lineage>
        <taxon>Bacteria</taxon>
        <taxon>Pseudomonadati</taxon>
        <taxon>Pseudomonadota</taxon>
        <taxon>Gammaproteobacteria</taxon>
        <taxon>Enterobacterales</taxon>
        <taxon>Enterobacteriaceae</taxon>
        <taxon>Klebsiella/Raoultella group</taxon>
        <taxon>Klebsiella</taxon>
        <taxon>Klebsiella pneumoniae complex</taxon>
    </lineage>
</organism>
<sequence length="671" mass="73630">MEPIEQQLTELRTTLRHHEYLYHVMDAPEVPDAEYDRLMRELRELESQHPELITPDSPTQRVGAAPLTAFSQIRHEVPMLSLDNVFDEESFLAFNKRVQDRLKSTDDLTYCCELKLDGLAVSILYENGVLMQAATRGDGTTGEDITSNVRTIRTIPLKLHGENIPARLEVRGEVFLPQAGFEKINEEARRTGGKVFANPRNAAAGSLRQLDPRITAKRPLTFFCYGVGVLEGGELPASHSARLQQFKAWGLPVSDRVTLCHTPEEVLTYYRKVEEDRPHLGFDIDGVVIKVDSLALQEQLGFVARAPRWAVAFKFPAQEQMTFVRDVEFQVGRTGAITPVARLEPVHVAGVLVSNATLHNADEIERLGLKIGDKVVIRRAGDVIPQVVNVVLSERPADARDVVFPTHCPVCQSDVERVEGEAVARCTGGLICGAQRKESLKHFVSRRALDVDGMGDKIIDQLVEKEYVHTPADLFRLSAGKLTGLDRMGPKSAQNVVNALEKAKETTFARFLYALGIREVGEATAAALAAHFGTLEALEQASIEELQKVPDVGIVVATHTFNFFAEESNRDVIAQLLAEGVHWPAPVVVKAEEIDSPFAGKTVVLTGSLSQLSRDDAKARLVALGAKVAGSVSKKTDLVIAGEAAGSKLAKAQELGIEVIDEAEMMRLLGE</sequence>
<evidence type="ECO:0000255" key="1">
    <source>
        <dbReference type="HAMAP-Rule" id="MF_01588"/>
    </source>
</evidence>
<proteinExistence type="inferred from homology"/>
<name>DNLJ_KLEP3</name>
<keyword id="KW-0227">DNA damage</keyword>
<keyword id="KW-0234">DNA repair</keyword>
<keyword id="KW-0235">DNA replication</keyword>
<keyword id="KW-0436">Ligase</keyword>
<keyword id="KW-0460">Magnesium</keyword>
<keyword id="KW-0464">Manganese</keyword>
<keyword id="KW-0479">Metal-binding</keyword>
<keyword id="KW-0520">NAD</keyword>
<keyword id="KW-0862">Zinc</keyword>
<dbReference type="EC" id="6.5.1.2" evidence="1"/>
<dbReference type="EMBL" id="CP000964">
    <property type="protein sequence ID" value="ACI10236.1"/>
    <property type="molecule type" value="Genomic_DNA"/>
</dbReference>
<dbReference type="SMR" id="B5XVT4"/>
<dbReference type="KEGG" id="kpe:KPK_1381"/>
<dbReference type="HOGENOM" id="CLU_007764_2_1_6"/>
<dbReference type="Proteomes" id="UP000001734">
    <property type="component" value="Chromosome"/>
</dbReference>
<dbReference type="GO" id="GO:0005829">
    <property type="term" value="C:cytosol"/>
    <property type="evidence" value="ECO:0007669"/>
    <property type="project" value="TreeGrafter"/>
</dbReference>
<dbReference type="GO" id="GO:0003677">
    <property type="term" value="F:DNA binding"/>
    <property type="evidence" value="ECO:0007669"/>
    <property type="project" value="InterPro"/>
</dbReference>
<dbReference type="GO" id="GO:0003911">
    <property type="term" value="F:DNA ligase (NAD+) activity"/>
    <property type="evidence" value="ECO:0007669"/>
    <property type="project" value="UniProtKB-UniRule"/>
</dbReference>
<dbReference type="GO" id="GO:0046872">
    <property type="term" value="F:metal ion binding"/>
    <property type="evidence" value="ECO:0007669"/>
    <property type="project" value="UniProtKB-KW"/>
</dbReference>
<dbReference type="GO" id="GO:0006281">
    <property type="term" value="P:DNA repair"/>
    <property type="evidence" value="ECO:0007669"/>
    <property type="project" value="UniProtKB-KW"/>
</dbReference>
<dbReference type="GO" id="GO:0006260">
    <property type="term" value="P:DNA replication"/>
    <property type="evidence" value="ECO:0007669"/>
    <property type="project" value="UniProtKB-KW"/>
</dbReference>
<dbReference type="CDD" id="cd17748">
    <property type="entry name" value="BRCT_DNA_ligase_like"/>
    <property type="match status" value="1"/>
</dbReference>
<dbReference type="CDD" id="cd00114">
    <property type="entry name" value="LIGANc"/>
    <property type="match status" value="1"/>
</dbReference>
<dbReference type="FunFam" id="1.10.150.20:FF:000006">
    <property type="entry name" value="DNA ligase"/>
    <property type="match status" value="1"/>
</dbReference>
<dbReference type="FunFam" id="1.10.150.20:FF:000007">
    <property type="entry name" value="DNA ligase"/>
    <property type="match status" value="1"/>
</dbReference>
<dbReference type="FunFam" id="1.10.287.610:FF:000002">
    <property type="entry name" value="DNA ligase"/>
    <property type="match status" value="1"/>
</dbReference>
<dbReference type="FunFam" id="2.40.50.140:FF:000012">
    <property type="entry name" value="DNA ligase"/>
    <property type="match status" value="1"/>
</dbReference>
<dbReference type="FunFam" id="3.30.470.30:FF:000001">
    <property type="entry name" value="DNA ligase"/>
    <property type="match status" value="1"/>
</dbReference>
<dbReference type="FunFam" id="3.40.50.10190:FF:000004">
    <property type="entry name" value="DNA ligase"/>
    <property type="match status" value="1"/>
</dbReference>
<dbReference type="FunFam" id="6.20.10.30:FF:000001">
    <property type="entry name" value="DNA ligase"/>
    <property type="match status" value="1"/>
</dbReference>
<dbReference type="Gene3D" id="6.20.10.30">
    <property type="match status" value="1"/>
</dbReference>
<dbReference type="Gene3D" id="1.10.150.20">
    <property type="entry name" value="5' to 3' exonuclease, C-terminal subdomain"/>
    <property type="match status" value="2"/>
</dbReference>
<dbReference type="Gene3D" id="3.40.50.10190">
    <property type="entry name" value="BRCT domain"/>
    <property type="match status" value="1"/>
</dbReference>
<dbReference type="Gene3D" id="3.30.470.30">
    <property type="entry name" value="DNA ligase/mRNA capping enzyme"/>
    <property type="match status" value="1"/>
</dbReference>
<dbReference type="Gene3D" id="1.10.287.610">
    <property type="entry name" value="Helix hairpin bin"/>
    <property type="match status" value="1"/>
</dbReference>
<dbReference type="Gene3D" id="2.40.50.140">
    <property type="entry name" value="Nucleic acid-binding proteins"/>
    <property type="match status" value="1"/>
</dbReference>
<dbReference type="HAMAP" id="MF_01588">
    <property type="entry name" value="DNA_ligase_A"/>
    <property type="match status" value="1"/>
</dbReference>
<dbReference type="InterPro" id="IPR001357">
    <property type="entry name" value="BRCT_dom"/>
</dbReference>
<dbReference type="InterPro" id="IPR036420">
    <property type="entry name" value="BRCT_dom_sf"/>
</dbReference>
<dbReference type="InterPro" id="IPR041663">
    <property type="entry name" value="DisA/LigA_HHH"/>
</dbReference>
<dbReference type="InterPro" id="IPR001679">
    <property type="entry name" value="DNA_ligase"/>
</dbReference>
<dbReference type="InterPro" id="IPR018239">
    <property type="entry name" value="DNA_ligase_AS"/>
</dbReference>
<dbReference type="InterPro" id="IPR033136">
    <property type="entry name" value="DNA_ligase_CS"/>
</dbReference>
<dbReference type="InterPro" id="IPR013839">
    <property type="entry name" value="DNAligase_adenylation"/>
</dbReference>
<dbReference type="InterPro" id="IPR013840">
    <property type="entry name" value="DNAligase_N"/>
</dbReference>
<dbReference type="InterPro" id="IPR003583">
    <property type="entry name" value="Hlx-hairpin-Hlx_DNA-bd_motif"/>
</dbReference>
<dbReference type="InterPro" id="IPR012340">
    <property type="entry name" value="NA-bd_OB-fold"/>
</dbReference>
<dbReference type="InterPro" id="IPR004150">
    <property type="entry name" value="NAD_DNA_ligase_OB"/>
</dbReference>
<dbReference type="InterPro" id="IPR010994">
    <property type="entry name" value="RuvA_2-like"/>
</dbReference>
<dbReference type="InterPro" id="IPR004149">
    <property type="entry name" value="Znf_DNAligase_C4"/>
</dbReference>
<dbReference type="NCBIfam" id="TIGR00575">
    <property type="entry name" value="dnlj"/>
    <property type="match status" value="1"/>
</dbReference>
<dbReference type="NCBIfam" id="NF005932">
    <property type="entry name" value="PRK07956.1"/>
    <property type="match status" value="1"/>
</dbReference>
<dbReference type="PANTHER" id="PTHR23389">
    <property type="entry name" value="CHROMOSOME TRANSMISSION FIDELITY FACTOR 18"/>
    <property type="match status" value="1"/>
</dbReference>
<dbReference type="PANTHER" id="PTHR23389:SF9">
    <property type="entry name" value="DNA LIGASE"/>
    <property type="match status" value="1"/>
</dbReference>
<dbReference type="Pfam" id="PF00533">
    <property type="entry name" value="BRCT"/>
    <property type="match status" value="1"/>
</dbReference>
<dbReference type="Pfam" id="PF01653">
    <property type="entry name" value="DNA_ligase_aden"/>
    <property type="match status" value="1"/>
</dbReference>
<dbReference type="Pfam" id="PF03120">
    <property type="entry name" value="DNA_ligase_OB"/>
    <property type="match status" value="1"/>
</dbReference>
<dbReference type="Pfam" id="PF03119">
    <property type="entry name" value="DNA_ligase_ZBD"/>
    <property type="match status" value="1"/>
</dbReference>
<dbReference type="Pfam" id="PF12826">
    <property type="entry name" value="HHH_2"/>
    <property type="match status" value="1"/>
</dbReference>
<dbReference type="Pfam" id="PF14520">
    <property type="entry name" value="HHH_5"/>
    <property type="match status" value="1"/>
</dbReference>
<dbReference type="Pfam" id="PF22745">
    <property type="entry name" value="Nlig-Ia"/>
    <property type="match status" value="1"/>
</dbReference>
<dbReference type="PIRSF" id="PIRSF001604">
    <property type="entry name" value="LigA"/>
    <property type="match status" value="1"/>
</dbReference>
<dbReference type="SMART" id="SM00292">
    <property type="entry name" value="BRCT"/>
    <property type="match status" value="1"/>
</dbReference>
<dbReference type="SMART" id="SM00278">
    <property type="entry name" value="HhH1"/>
    <property type="match status" value="4"/>
</dbReference>
<dbReference type="SMART" id="SM00532">
    <property type="entry name" value="LIGANc"/>
    <property type="match status" value="1"/>
</dbReference>
<dbReference type="SUPFAM" id="SSF52113">
    <property type="entry name" value="BRCT domain"/>
    <property type="match status" value="1"/>
</dbReference>
<dbReference type="SUPFAM" id="SSF56091">
    <property type="entry name" value="DNA ligase/mRNA capping enzyme, catalytic domain"/>
    <property type="match status" value="1"/>
</dbReference>
<dbReference type="SUPFAM" id="SSF50249">
    <property type="entry name" value="Nucleic acid-binding proteins"/>
    <property type="match status" value="1"/>
</dbReference>
<dbReference type="SUPFAM" id="SSF47781">
    <property type="entry name" value="RuvA domain 2-like"/>
    <property type="match status" value="1"/>
</dbReference>
<dbReference type="PROSITE" id="PS50172">
    <property type="entry name" value="BRCT"/>
    <property type="match status" value="1"/>
</dbReference>
<dbReference type="PROSITE" id="PS01055">
    <property type="entry name" value="DNA_LIGASE_N1"/>
    <property type="match status" value="1"/>
</dbReference>
<dbReference type="PROSITE" id="PS01056">
    <property type="entry name" value="DNA_LIGASE_N2"/>
    <property type="match status" value="1"/>
</dbReference>